<sequence>MADKETLLKLREDFKMQNKSVFILGASGETGKVLLKEILGQNLFSKVTLIGRRKLTFEEEAYNNVNQEVVDFEKLDEYAPAFQGHDVGFCCLGTTRRKAGADGFVRVDRDYVLKSAELAKAGGCKHFNLLSSRGADKSSSFLYLQVKGEVEAKVEELKFDRLSVFRPGVLLCDRQESRPGEWLARKFFGSLPDSWASGYAVPVVTVVRAMLNNLVSPGSGQMELLENKAILHLGKDSDGPKL</sequence>
<accession>B0BNF8</accession>
<accession>A0A8I6AEZ6</accession>
<accession>G3V8Y4</accession>
<organism evidence="6">
    <name type="scientific">Rattus norvegicus</name>
    <name type="common">Rat</name>
    <dbReference type="NCBI Taxonomy" id="10116"/>
    <lineage>
        <taxon>Eukaryota</taxon>
        <taxon>Metazoa</taxon>
        <taxon>Chordata</taxon>
        <taxon>Craniata</taxon>
        <taxon>Vertebrata</taxon>
        <taxon>Euteleostomi</taxon>
        <taxon>Mammalia</taxon>
        <taxon>Eutheria</taxon>
        <taxon>Euarchontoglires</taxon>
        <taxon>Glires</taxon>
        <taxon>Rodentia</taxon>
        <taxon>Myomorpha</taxon>
        <taxon>Muroidea</taxon>
        <taxon>Muridae</taxon>
        <taxon>Murinae</taxon>
        <taxon>Rattus</taxon>
    </lineage>
</organism>
<dbReference type="EMBL" id="BC158803">
    <property type="protein sequence ID" value="AAI58804.1"/>
    <property type="molecule type" value="mRNA"/>
</dbReference>
<dbReference type="EMBL" id="CH473979">
    <property type="protein sequence ID" value="EDM07222.1"/>
    <property type="molecule type" value="Genomic_DNA"/>
</dbReference>
<dbReference type="RefSeq" id="NP_001099733.1">
    <property type="nucleotide sequence ID" value="NM_001106263.2"/>
</dbReference>
<dbReference type="RefSeq" id="XP_006229312.1">
    <property type="nucleotide sequence ID" value="XM_006229250.5"/>
</dbReference>
<dbReference type="RefSeq" id="XP_006229313.1">
    <property type="nucleotide sequence ID" value="XM_006229251.4"/>
</dbReference>
<dbReference type="FunCoup" id="B0BNF8">
    <property type="interactions" value="372"/>
</dbReference>
<dbReference type="PhosphoSitePlus" id="B0BNF8"/>
<dbReference type="PeptideAtlas" id="B0BNF8"/>
<dbReference type="Ensembl" id="ENSRNOT00000117631.1">
    <property type="protein sequence ID" value="ENSRNOP00000092156.1"/>
    <property type="gene ID" value="ENSRNOG00000022189.7"/>
</dbReference>
<dbReference type="GeneID" id="292935"/>
<dbReference type="KEGG" id="rno:292935"/>
<dbReference type="AGR" id="RGD:1309941"/>
<dbReference type="CTD" id="10553"/>
<dbReference type="RGD" id="1309941">
    <property type="gene designation" value="Htatip2"/>
</dbReference>
<dbReference type="GeneTree" id="ENSGT00390000008184"/>
<dbReference type="HOGENOM" id="CLU_071330_2_2_1"/>
<dbReference type="OrthoDB" id="430436at2759"/>
<dbReference type="Proteomes" id="UP000002494">
    <property type="component" value="Chromosome 1"/>
</dbReference>
<dbReference type="Proteomes" id="UP000234681">
    <property type="component" value="Chromosome 1"/>
</dbReference>
<dbReference type="GO" id="GO:0005737">
    <property type="term" value="C:cytoplasm"/>
    <property type="evidence" value="ECO:0000266"/>
    <property type="project" value="RGD"/>
</dbReference>
<dbReference type="GO" id="GO:0005635">
    <property type="term" value="C:nuclear envelope"/>
    <property type="evidence" value="ECO:0000266"/>
    <property type="project" value="RGD"/>
</dbReference>
<dbReference type="GO" id="GO:0004674">
    <property type="term" value="F:protein serine/threonine kinase activity"/>
    <property type="evidence" value="ECO:0000266"/>
    <property type="project" value="RGD"/>
</dbReference>
<dbReference type="GO" id="GO:0001525">
    <property type="term" value="P:angiogenesis"/>
    <property type="evidence" value="ECO:0007669"/>
    <property type="project" value="UniProtKB-KW"/>
</dbReference>
<dbReference type="GO" id="GO:0051170">
    <property type="term" value="P:import into nucleus"/>
    <property type="evidence" value="ECO:0000266"/>
    <property type="project" value="RGD"/>
</dbReference>
<dbReference type="GO" id="GO:0043068">
    <property type="term" value="P:positive regulation of programmed cell death"/>
    <property type="evidence" value="ECO:0000266"/>
    <property type="project" value="RGD"/>
</dbReference>
<dbReference type="GO" id="GO:0045944">
    <property type="term" value="P:positive regulation of transcription by RNA polymerase II"/>
    <property type="evidence" value="ECO:0000266"/>
    <property type="project" value="RGD"/>
</dbReference>
<dbReference type="GO" id="GO:0045765">
    <property type="term" value="P:regulation of angiogenesis"/>
    <property type="evidence" value="ECO:0000266"/>
    <property type="project" value="RGD"/>
</dbReference>
<dbReference type="CDD" id="cd05250">
    <property type="entry name" value="CC3_like_SDR_a"/>
    <property type="match status" value="1"/>
</dbReference>
<dbReference type="FunFam" id="3.40.50.720:FF:000271">
    <property type="entry name" value="oxidoreductase HTATIP2 isoform X1"/>
    <property type="match status" value="1"/>
</dbReference>
<dbReference type="Gene3D" id="3.40.50.720">
    <property type="entry name" value="NAD(P)-binding Rossmann-like Domain"/>
    <property type="match status" value="1"/>
</dbReference>
<dbReference type="InterPro" id="IPR016040">
    <property type="entry name" value="NAD(P)-bd_dom"/>
</dbReference>
<dbReference type="InterPro" id="IPR036291">
    <property type="entry name" value="NAD(P)-bd_dom_sf"/>
</dbReference>
<dbReference type="PANTHER" id="PTHR14097">
    <property type="entry name" value="OXIDOREDUCTASE HTATIP2"/>
    <property type="match status" value="1"/>
</dbReference>
<dbReference type="PANTHER" id="PTHR14097:SF7">
    <property type="entry name" value="OXIDOREDUCTASE HTATIP2"/>
    <property type="match status" value="1"/>
</dbReference>
<dbReference type="Pfam" id="PF13460">
    <property type="entry name" value="NAD_binding_10"/>
    <property type="match status" value="1"/>
</dbReference>
<dbReference type="SUPFAM" id="SSF51735">
    <property type="entry name" value="NAD(P)-binding Rossmann-fold domains"/>
    <property type="match status" value="1"/>
</dbReference>
<feature type="initiator methionine" description="Removed" evidence="1">
    <location>
        <position position="1"/>
    </location>
</feature>
<feature type="chain" id="PRO_0000462306" description="Protein HTATIP2">
    <location>
        <begin position="2"/>
        <end position="242"/>
    </location>
</feature>
<feature type="region of interest" description="Required for interaction with elongation factor EEF1A1" evidence="2">
    <location>
        <begin position="2"/>
        <end position="25"/>
    </location>
</feature>
<feature type="active site" description="Proton acceptor" evidence="1">
    <location>
        <position position="143"/>
    </location>
</feature>
<feature type="active site" evidence="1">
    <location>
        <position position="147"/>
    </location>
</feature>
<feature type="binding site" evidence="1">
    <location>
        <position position="27"/>
    </location>
    <ligand>
        <name>NADPH</name>
        <dbReference type="ChEBI" id="CHEBI:57783"/>
    </ligand>
</feature>
<feature type="binding site" evidence="1">
    <location>
        <position position="28"/>
    </location>
    <ligand>
        <name>NADPH</name>
        <dbReference type="ChEBI" id="CHEBI:57783"/>
    </ligand>
</feature>
<feature type="binding site" evidence="1">
    <location>
        <position position="29"/>
    </location>
    <ligand>
        <name>NADPH</name>
        <dbReference type="ChEBI" id="CHEBI:57783"/>
    </ligand>
</feature>
<feature type="binding site" evidence="1">
    <location>
        <position position="30"/>
    </location>
    <ligand>
        <name>NADPH</name>
        <dbReference type="ChEBI" id="CHEBI:57783"/>
    </ligand>
</feature>
<feature type="binding site" evidence="1">
    <location>
        <position position="52"/>
    </location>
    <ligand>
        <name>NADPH</name>
        <dbReference type="ChEBI" id="CHEBI:57783"/>
    </ligand>
</feature>
<feature type="binding site" evidence="1">
    <location>
        <position position="53"/>
    </location>
    <ligand>
        <name>NADPH</name>
        <dbReference type="ChEBI" id="CHEBI:57783"/>
    </ligand>
</feature>
<feature type="binding site" evidence="1">
    <location>
        <position position="92"/>
    </location>
    <ligand>
        <name>NADPH</name>
        <dbReference type="ChEBI" id="CHEBI:57783"/>
    </ligand>
</feature>
<feature type="binding site" evidence="1">
    <location>
        <position position="93"/>
    </location>
    <ligand>
        <name>NADPH</name>
        <dbReference type="ChEBI" id="CHEBI:57783"/>
    </ligand>
</feature>
<feature type="binding site" evidence="1">
    <location>
        <position position="143"/>
    </location>
    <ligand>
        <name>NADPH</name>
        <dbReference type="ChEBI" id="CHEBI:57783"/>
    </ligand>
</feature>
<feature type="binding site" evidence="1">
    <location>
        <position position="147"/>
    </location>
    <ligand>
        <name>NADPH</name>
        <dbReference type="ChEBI" id="CHEBI:57783"/>
    </ligand>
</feature>
<feature type="binding site" evidence="1">
    <location>
        <position position="170"/>
    </location>
    <ligand>
        <name>NADPH</name>
        <dbReference type="ChEBI" id="CHEBI:57783"/>
    </ligand>
</feature>
<feature type="binding site" evidence="1">
    <location>
        <position position="178"/>
    </location>
    <ligand>
        <name>NADPH</name>
        <dbReference type="ChEBI" id="CHEBI:57783"/>
    </ligand>
</feature>
<feature type="modified residue" description="N-acetylalanine" evidence="1">
    <location>
        <position position="2"/>
    </location>
</feature>
<feature type="disulfide bond" description="Interchain; during oxidative stress" evidence="1">
    <location>
        <position position="172"/>
    </location>
</feature>
<evidence type="ECO:0000250" key="1">
    <source>
        <dbReference type="UniProtKB" id="Q9BUP3"/>
    </source>
</evidence>
<evidence type="ECO:0000269" key="2">
    <source>
    </source>
</evidence>
<evidence type="ECO:0000305" key="3"/>
<evidence type="ECO:0000312" key="4">
    <source>
        <dbReference type="EMBL" id="AAI58804.1"/>
    </source>
</evidence>
<evidence type="ECO:0000312" key="5">
    <source>
        <dbReference type="EMBL" id="EDM07222.1"/>
    </source>
</evidence>
<evidence type="ECO:0000312" key="6">
    <source>
        <dbReference type="Proteomes" id="UP000002494"/>
    </source>
</evidence>
<evidence type="ECO:0000312" key="7">
    <source>
        <dbReference type="RGD" id="1309941"/>
    </source>
</evidence>
<comment type="function">
    <text evidence="1 2">Represses translation by preventing reactivation of elongation factor eEF1A (PubMed:31468715). May also inhibit nuclear import by competing with nuclear import substrates for binding to a subset of nuclear transport receptors (By similarity). Has additionally been proposed to act as a redox sensor involved in cellular oxidative stress surveillance (By similarity). May bind NADPH (By similarity).</text>
</comment>
<comment type="subunit">
    <text evidence="1 2">Monomer (By similarity). Forms homodimers during oxidative stress (By similarity). Interacts (via N-terminus) with elongation factor EEF1A1 (via middle-region); the interaction is direct and competes with EEF1A1 binding to guanyl-nucleotide exchange factor EEF1B2, thereby inhibiting GDP for GTP exchange and reactivation of EEF1A1 (PubMed:31468715). Interacts with nuclear transport receptors XPO4, IPO5/RANBP5, IPO7, IPO9 and KPNB1 as well as GCN1L1/GCN1 and LRPPRC probably through their HEAT repeats (By similarity). Binds NCOA5/CIA (By similarity).</text>
</comment>
<keyword id="KW-0007">Acetylation</keyword>
<keyword id="KW-1015">Disulfide bond</keyword>
<keyword id="KW-0521">NADP</keyword>
<keyword id="KW-1185">Reference proteome</keyword>
<keyword id="KW-0810">Translation regulation</keyword>
<proteinExistence type="evidence at protein level"/>
<reference key="1">
    <citation type="journal article" date="2004" name="Nature">
        <title>Genome sequence of the Brown Norway rat yields insights into mammalian evolution.</title>
        <authorList>
            <person name="Gibbs R.A."/>
            <person name="Weinstock G.M."/>
            <person name="Metzker M.L."/>
            <person name="Muzny D.M."/>
            <person name="Sodergren E.J."/>
            <person name="Scherer S."/>
            <person name="Scott G."/>
            <person name="Steffen D."/>
            <person name="Worley K.C."/>
            <person name="Burch P.E."/>
            <person name="Okwuonu G."/>
            <person name="Hines S."/>
            <person name="Lewis L."/>
            <person name="Deramo C."/>
            <person name="Delgado O."/>
            <person name="Dugan-Rocha S."/>
            <person name="Miner G."/>
            <person name="Morgan M."/>
            <person name="Hawes A."/>
            <person name="Gill R."/>
            <person name="Holt R.A."/>
            <person name="Adams M.D."/>
            <person name="Amanatides P.G."/>
            <person name="Baden-Tillson H."/>
            <person name="Barnstead M."/>
            <person name="Chin S."/>
            <person name="Evans C.A."/>
            <person name="Ferriera S."/>
            <person name="Fosler C."/>
            <person name="Glodek A."/>
            <person name="Gu Z."/>
            <person name="Jennings D."/>
            <person name="Kraft C.L."/>
            <person name="Nguyen T."/>
            <person name="Pfannkoch C.M."/>
            <person name="Sitter C."/>
            <person name="Sutton G.G."/>
            <person name="Venter J.C."/>
            <person name="Woodage T."/>
            <person name="Smith D."/>
            <person name="Lee H.-M."/>
            <person name="Gustafson E."/>
            <person name="Cahill P."/>
            <person name="Kana A."/>
            <person name="Doucette-Stamm L."/>
            <person name="Weinstock K."/>
            <person name="Fechtel K."/>
            <person name="Weiss R.B."/>
            <person name="Dunn D.M."/>
            <person name="Green E.D."/>
            <person name="Blakesley R.W."/>
            <person name="Bouffard G.G."/>
            <person name="De Jong P.J."/>
            <person name="Osoegawa K."/>
            <person name="Zhu B."/>
            <person name="Marra M."/>
            <person name="Schein J."/>
            <person name="Bosdet I."/>
            <person name="Fjell C."/>
            <person name="Jones S."/>
            <person name="Krzywinski M."/>
            <person name="Mathewson C."/>
            <person name="Siddiqui A."/>
            <person name="Wye N."/>
            <person name="McPherson J."/>
            <person name="Zhao S."/>
            <person name="Fraser C.M."/>
            <person name="Shetty J."/>
            <person name="Shatsman S."/>
            <person name="Geer K."/>
            <person name="Chen Y."/>
            <person name="Abramzon S."/>
            <person name="Nierman W.C."/>
            <person name="Havlak P.H."/>
            <person name="Chen R."/>
            <person name="Durbin K.J."/>
            <person name="Egan A."/>
            <person name="Ren Y."/>
            <person name="Song X.-Z."/>
            <person name="Li B."/>
            <person name="Liu Y."/>
            <person name="Qin X."/>
            <person name="Cawley S."/>
            <person name="Cooney A.J."/>
            <person name="D'Souza L.M."/>
            <person name="Martin K."/>
            <person name="Wu J.Q."/>
            <person name="Gonzalez-Garay M.L."/>
            <person name="Jackson A.R."/>
            <person name="Kalafus K.J."/>
            <person name="McLeod M.P."/>
            <person name="Milosavljevic A."/>
            <person name="Virk D."/>
            <person name="Volkov A."/>
            <person name="Wheeler D.A."/>
            <person name="Zhang Z."/>
            <person name="Bailey J.A."/>
            <person name="Eichler E.E."/>
            <person name="Tuzun E."/>
            <person name="Birney E."/>
            <person name="Mongin E."/>
            <person name="Ureta-Vidal A."/>
            <person name="Woodwark C."/>
            <person name="Zdobnov E."/>
            <person name="Bork P."/>
            <person name="Suyama M."/>
            <person name="Torrents D."/>
            <person name="Alexandersson M."/>
            <person name="Trask B.J."/>
            <person name="Young J.M."/>
            <person name="Huang H."/>
            <person name="Wang H."/>
            <person name="Xing H."/>
            <person name="Daniels S."/>
            <person name="Gietzen D."/>
            <person name="Schmidt J."/>
            <person name="Stevens K."/>
            <person name="Vitt U."/>
            <person name="Wingrove J."/>
            <person name="Camara F."/>
            <person name="Mar Alba M."/>
            <person name="Abril J.F."/>
            <person name="Guigo R."/>
            <person name="Smit A."/>
            <person name="Dubchak I."/>
            <person name="Rubin E.M."/>
            <person name="Couronne O."/>
            <person name="Poliakov A."/>
            <person name="Huebner N."/>
            <person name="Ganten D."/>
            <person name="Goesele C."/>
            <person name="Hummel O."/>
            <person name="Kreitler T."/>
            <person name="Lee Y.-A."/>
            <person name="Monti J."/>
            <person name="Schulz H."/>
            <person name="Zimdahl H."/>
            <person name="Himmelbauer H."/>
            <person name="Lehrach H."/>
            <person name="Jacob H.J."/>
            <person name="Bromberg S."/>
            <person name="Gullings-Handley J."/>
            <person name="Jensen-Seaman M.I."/>
            <person name="Kwitek A.E."/>
            <person name="Lazar J."/>
            <person name="Pasko D."/>
            <person name="Tonellato P.J."/>
            <person name="Twigger S."/>
            <person name="Ponting C.P."/>
            <person name="Duarte J.M."/>
            <person name="Rice S."/>
            <person name="Goodstadt L."/>
            <person name="Beatson S.A."/>
            <person name="Emes R.D."/>
            <person name="Winter E.E."/>
            <person name="Webber C."/>
            <person name="Brandt P."/>
            <person name="Nyakatura G."/>
            <person name="Adetobi M."/>
            <person name="Chiaromonte F."/>
            <person name="Elnitski L."/>
            <person name="Eswara P."/>
            <person name="Hardison R.C."/>
            <person name="Hou M."/>
            <person name="Kolbe D."/>
            <person name="Makova K."/>
            <person name="Miller W."/>
            <person name="Nekrutenko A."/>
            <person name="Riemer C."/>
            <person name="Schwartz S."/>
            <person name="Taylor J."/>
            <person name="Yang S."/>
            <person name="Zhang Y."/>
            <person name="Lindpaintner K."/>
            <person name="Andrews T.D."/>
            <person name="Caccamo M."/>
            <person name="Clamp M."/>
            <person name="Clarke L."/>
            <person name="Curwen V."/>
            <person name="Durbin R.M."/>
            <person name="Eyras E."/>
            <person name="Searle S.M."/>
            <person name="Cooper G.M."/>
            <person name="Batzoglou S."/>
            <person name="Brudno M."/>
            <person name="Sidow A."/>
            <person name="Stone E.A."/>
            <person name="Payseur B.A."/>
            <person name="Bourque G."/>
            <person name="Lopez-Otin C."/>
            <person name="Puente X.S."/>
            <person name="Chakrabarti K."/>
            <person name="Chatterji S."/>
            <person name="Dewey C."/>
            <person name="Pachter L."/>
            <person name="Bray N."/>
            <person name="Yap V.B."/>
            <person name="Caspi A."/>
            <person name="Tesler G."/>
            <person name="Pevzner P.A."/>
            <person name="Haussler D."/>
            <person name="Roskin K.M."/>
            <person name="Baertsch R."/>
            <person name="Clawson H."/>
            <person name="Furey T.S."/>
            <person name="Hinrichs A.S."/>
            <person name="Karolchik D."/>
            <person name="Kent W.J."/>
            <person name="Rosenbloom K.R."/>
            <person name="Trumbower H."/>
            <person name="Weirauch M."/>
            <person name="Cooper D.N."/>
            <person name="Stenson P.D."/>
            <person name="Ma B."/>
            <person name="Brent M."/>
            <person name="Arumugam M."/>
            <person name="Shteynberg D."/>
            <person name="Copley R.R."/>
            <person name="Taylor M.S."/>
            <person name="Riethman H."/>
            <person name="Mudunuri U."/>
            <person name="Peterson J."/>
            <person name="Guyer M."/>
            <person name="Felsenfeld A."/>
            <person name="Old S."/>
            <person name="Mockrin S."/>
            <person name="Collins F.S."/>
        </authorList>
    </citation>
    <scope>NUCLEOTIDE SEQUENCE [LARGE SCALE GENOMIC DNA]</scope>
    <source>
        <strain>Brown Norway</strain>
    </source>
</reference>
<reference evidence="4" key="2">
    <citation type="journal article" date="2004" name="Genome Res.">
        <title>The status, quality, and expansion of the NIH full-length cDNA project: the Mammalian Gene Collection (MGC).</title>
        <authorList>
            <consortium name="The MGC Project Team"/>
        </authorList>
    </citation>
    <scope>NUCLEOTIDE SEQUENCE [LARGE SCALE MRNA]</scope>
    <source>
        <tissue evidence="4">Liver</tissue>
    </source>
</reference>
<reference evidence="5" key="3">
    <citation type="journal article" date="2005" name="Genome Res.">
        <title>Gene and alternative splicing annotation with AIR.</title>
        <authorList>
            <person name="Florea L."/>
            <person name="Di Francesco V."/>
            <person name="Miller J."/>
            <person name="Turner R."/>
            <person name="Yao A."/>
            <person name="Harris M."/>
            <person name="Walenz B."/>
            <person name="Mobarry C."/>
            <person name="Merkulov G.V."/>
            <person name="Charlab R."/>
            <person name="Dew I."/>
            <person name="Deng Z."/>
            <person name="Istrail S."/>
            <person name="Li P."/>
            <person name="Sutton G."/>
        </authorList>
    </citation>
    <scope>NUCLEOTIDE SEQUENCE [LARGE SCALE GENOMIC DNA]</scope>
    <source>
        <strain evidence="5">Brown Norway</strain>
    </source>
</reference>
<reference evidence="3" key="4">
    <citation type="journal article" date="2019" name="EMBO Mol. Med.">
        <title>TIP30 counteracts cardiac hypertrophy and failure by inhibiting translational elongation.</title>
        <authorList>
            <person name="Grund A."/>
            <person name="Szaroszyk M."/>
            <person name="Korf-Klingebiel M."/>
            <person name="Malek Mohammadi M."/>
            <person name="Trogisch F.A."/>
            <person name="Schrameck U."/>
            <person name="Gigina A."/>
            <person name="Tiedje C."/>
            <person name="Gaestel M."/>
            <person name="Kraft T."/>
            <person name="Hegermann J."/>
            <person name="Batkai S."/>
            <person name="Thum T."/>
            <person name="Perrot A."/>
            <person name="Remedios C.D."/>
            <person name="Riechert E."/>
            <person name="Voelkers M."/>
            <person name="Doroudgar S."/>
            <person name="Jungmann A."/>
            <person name="Bauer R."/>
            <person name="Yin X."/>
            <person name="Mayr M."/>
            <person name="Wollert K.C."/>
            <person name="Pich A."/>
            <person name="Xiao H."/>
            <person name="Katus H.A."/>
            <person name="Bauersachs J."/>
            <person name="Mueller O.J."/>
            <person name="Heineke J."/>
        </authorList>
    </citation>
    <scope>FUNCTION</scope>
    <scope>INTERACTION WITH EEF1A1</scope>
</reference>
<name>HTAI2_RAT</name>
<protein>
    <recommendedName>
        <fullName evidence="3">Protein HTATIP2</fullName>
    </recommendedName>
</protein>
<gene>
    <name evidence="7" type="primary">Htatip2</name>
</gene>